<dbReference type="EC" id="4.1.1.39" evidence="1"/>
<dbReference type="EMBL" id="CP001635">
    <property type="protein sequence ID" value="ACS19651.1"/>
    <property type="molecule type" value="Genomic_DNA"/>
</dbReference>
<dbReference type="SMR" id="C5CPR2"/>
<dbReference type="STRING" id="543728.Vapar_3032"/>
<dbReference type="KEGG" id="vap:Vapar_3032"/>
<dbReference type="eggNOG" id="COG1850">
    <property type="taxonomic scope" value="Bacteria"/>
</dbReference>
<dbReference type="HOGENOM" id="CLU_031450_2_0_4"/>
<dbReference type="OrthoDB" id="9770811at2"/>
<dbReference type="GO" id="GO:0000287">
    <property type="term" value="F:magnesium ion binding"/>
    <property type="evidence" value="ECO:0007669"/>
    <property type="project" value="UniProtKB-UniRule"/>
</dbReference>
<dbReference type="GO" id="GO:0004497">
    <property type="term" value="F:monooxygenase activity"/>
    <property type="evidence" value="ECO:0007669"/>
    <property type="project" value="UniProtKB-KW"/>
</dbReference>
<dbReference type="GO" id="GO:0016984">
    <property type="term" value="F:ribulose-bisphosphate carboxylase activity"/>
    <property type="evidence" value="ECO:0007669"/>
    <property type="project" value="UniProtKB-UniRule"/>
</dbReference>
<dbReference type="GO" id="GO:0019253">
    <property type="term" value="P:reductive pentose-phosphate cycle"/>
    <property type="evidence" value="ECO:0007669"/>
    <property type="project" value="UniProtKB-UniRule"/>
</dbReference>
<dbReference type="CDD" id="cd08212">
    <property type="entry name" value="RuBisCO_large_I"/>
    <property type="match status" value="1"/>
</dbReference>
<dbReference type="Gene3D" id="3.20.20.110">
    <property type="entry name" value="Ribulose bisphosphate carboxylase, large subunit, C-terminal domain"/>
    <property type="match status" value="1"/>
</dbReference>
<dbReference type="Gene3D" id="3.30.70.150">
    <property type="entry name" value="RuBisCO large subunit, N-terminal domain"/>
    <property type="match status" value="1"/>
</dbReference>
<dbReference type="HAMAP" id="MF_01338">
    <property type="entry name" value="RuBisCO_L_type1"/>
    <property type="match status" value="1"/>
</dbReference>
<dbReference type="InterPro" id="IPR033966">
    <property type="entry name" value="RuBisCO"/>
</dbReference>
<dbReference type="InterPro" id="IPR020878">
    <property type="entry name" value="RuBisCo_large_chain_AS"/>
</dbReference>
<dbReference type="InterPro" id="IPR000685">
    <property type="entry name" value="RuBisCO_lsu_C"/>
</dbReference>
<dbReference type="InterPro" id="IPR036376">
    <property type="entry name" value="RuBisCO_lsu_C_sf"/>
</dbReference>
<dbReference type="InterPro" id="IPR017443">
    <property type="entry name" value="RuBisCO_lsu_fd_N"/>
</dbReference>
<dbReference type="InterPro" id="IPR036422">
    <property type="entry name" value="RuBisCO_lsu_N_sf"/>
</dbReference>
<dbReference type="InterPro" id="IPR020888">
    <property type="entry name" value="RuBisCO_lsuI"/>
</dbReference>
<dbReference type="NCBIfam" id="NF003252">
    <property type="entry name" value="PRK04208.1"/>
    <property type="match status" value="1"/>
</dbReference>
<dbReference type="PANTHER" id="PTHR42704">
    <property type="entry name" value="RIBULOSE BISPHOSPHATE CARBOXYLASE"/>
    <property type="match status" value="1"/>
</dbReference>
<dbReference type="PANTHER" id="PTHR42704:SF17">
    <property type="entry name" value="RIBULOSE BISPHOSPHATE CARBOXYLASE LARGE CHAIN"/>
    <property type="match status" value="1"/>
</dbReference>
<dbReference type="Pfam" id="PF00016">
    <property type="entry name" value="RuBisCO_large"/>
    <property type="match status" value="1"/>
</dbReference>
<dbReference type="Pfam" id="PF02788">
    <property type="entry name" value="RuBisCO_large_N"/>
    <property type="match status" value="1"/>
</dbReference>
<dbReference type="SFLD" id="SFLDG01052">
    <property type="entry name" value="RuBisCO"/>
    <property type="match status" value="1"/>
</dbReference>
<dbReference type="SFLD" id="SFLDS00014">
    <property type="entry name" value="RuBisCO"/>
    <property type="match status" value="1"/>
</dbReference>
<dbReference type="SFLD" id="SFLDG00301">
    <property type="entry name" value="RuBisCO-like_proteins"/>
    <property type="match status" value="1"/>
</dbReference>
<dbReference type="SUPFAM" id="SSF51649">
    <property type="entry name" value="RuBisCo, C-terminal domain"/>
    <property type="match status" value="1"/>
</dbReference>
<dbReference type="SUPFAM" id="SSF54966">
    <property type="entry name" value="RuBisCO, large subunit, small (N-terminal) domain"/>
    <property type="match status" value="1"/>
</dbReference>
<dbReference type="PROSITE" id="PS00157">
    <property type="entry name" value="RUBISCO_LARGE"/>
    <property type="match status" value="1"/>
</dbReference>
<name>RBL_VARPS</name>
<protein>
    <recommendedName>
        <fullName evidence="1">Ribulose bisphosphate carboxylase large chain</fullName>
        <shortName evidence="1">RuBisCO large subunit</shortName>
        <ecNumber evidence="1">4.1.1.39</ecNumber>
    </recommendedName>
</protein>
<proteinExistence type="inferred from homology"/>
<accession>C5CPR2</accession>
<organism>
    <name type="scientific">Variovorax paradoxus (strain S110)</name>
    <dbReference type="NCBI Taxonomy" id="543728"/>
    <lineage>
        <taxon>Bacteria</taxon>
        <taxon>Pseudomonadati</taxon>
        <taxon>Pseudomonadota</taxon>
        <taxon>Betaproteobacteria</taxon>
        <taxon>Burkholderiales</taxon>
        <taxon>Comamonadaceae</taxon>
        <taxon>Variovorax</taxon>
    </lineage>
</organism>
<reference key="1">
    <citation type="journal article" date="2011" name="J. Bacteriol.">
        <title>Complete genome sequence of the metabolically versatile plant growth-promoting endophyte, Variovorax paradoxus S110.</title>
        <authorList>
            <person name="Han J.I."/>
            <person name="Choi H.K."/>
            <person name="Lee S.W."/>
            <person name="Orwin P.M."/>
            <person name="Kim J."/>
            <person name="Laroe S.L."/>
            <person name="Kim T.G."/>
            <person name="O'Neil J."/>
            <person name="Leadbetter J.R."/>
            <person name="Lee S.Y."/>
            <person name="Hur C.G."/>
            <person name="Spain J.C."/>
            <person name="Ovchinnikova G."/>
            <person name="Goodwin L."/>
            <person name="Han C."/>
        </authorList>
    </citation>
    <scope>NUCLEOTIDE SEQUENCE [LARGE SCALE GENOMIC DNA]</scope>
    <source>
        <strain>S110</strain>
    </source>
</reference>
<evidence type="ECO:0000255" key="1">
    <source>
        <dbReference type="HAMAP-Rule" id="MF_01338"/>
    </source>
</evidence>
<keyword id="KW-0113">Calvin cycle</keyword>
<keyword id="KW-0120">Carbon dioxide fixation</keyword>
<keyword id="KW-0456">Lyase</keyword>
<keyword id="KW-0460">Magnesium</keyword>
<keyword id="KW-0479">Metal-binding</keyword>
<keyword id="KW-0503">Monooxygenase</keyword>
<keyword id="KW-0560">Oxidoreductase</keyword>
<feature type="chain" id="PRO_1000214694" description="Ribulose bisphosphate carboxylase large chain">
    <location>
        <begin position="1"/>
        <end position="488"/>
    </location>
</feature>
<feature type="active site" description="Proton acceptor" evidence="1">
    <location>
        <position position="180"/>
    </location>
</feature>
<feature type="active site" description="Proton acceptor" evidence="1">
    <location>
        <position position="298"/>
    </location>
</feature>
<feature type="binding site" description="in homodimeric partner" evidence="1">
    <location>
        <position position="128"/>
    </location>
    <ligand>
        <name>substrate</name>
    </ligand>
</feature>
<feature type="binding site" evidence="1">
    <location>
        <position position="178"/>
    </location>
    <ligand>
        <name>substrate</name>
    </ligand>
</feature>
<feature type="binding site" evidence="1">
    <location>
        <position position="182"/>
    </location>
    <ligand>
        <name>substrate</name>
    </ligand>
</feature>
<feature type="binding site" description="via carbamate group" evidence="1">
    <location>
        <position position="206"/>
    </location>
    <ligand>
        <name>Mg(2+)</name>
        <dbReference type="ChEBI" id="CHEBI:18420"/>
    </ligand>
</feature>
<feature type="binding site" evidence="1">
    <location>
        <position position="208"/>
    </location>
    <ligand>
        <name>Mg(2+)</name>
        <dbReference type="ChEBI" id="CHEBI:18420"/>
    </ligand>
</feature>
<feature type="binding site" evidence="1">
    <location>
        <position position="209"/>
    </location>
    <ligand>
        <name>Mg(2+)</name>
        <dbReference type="ChEBI" id="CHEBI:18420"/>
    </ligand>
</feature>
<feature type="binding site" evidence="1">
    <location>
        <position position="299"/>
    </location>
    <ligand>
        <name>substrate</name>
    </ligand>
</feature>
<feature type="binding site" evidence="1">
    <location>
        <position position="331"/>
    </location>
    <ligand>
        <name>substrate</name>
    </ligand>
</feature>
<feature type="binding site" evidence="1">
    <location>
        <position position="383"/>
    </location>
    <ligand>
        <name>substrate</name>
    </ligand>
</feature>
<feature type="site" description="Transition state stabilizer" evidence="1">
    <location>
        <position position="338"/>
    </location>
</feature>
<feature type="modified residue" description="N6-carboxylysine" evidence="1">
    <location>
        <position position="206"/>
    </location>
</feature>
<sequence>MGNMNEAIQITDAKKRYSAGVLKYAQMGYWDGDYVPKDTDILALFRITPQEGVDAIEAAAAVAGESSTATWTVVWTDRLTACDMYRAKAYKVEPVPNNPGQYFCYVAYDLSLFEEGSITNVTASIIGNVFSFKPLKAARLEDMKFPVAYVKTFPGPPTGIVVERERLDKFGRPLLGATTKPKLGLSGRNYGRVVYEGLRGGLDFMKDDENINSQPFMHWRDRFLFVMDAVNKASAATGEVKGSYLNVTAGTMEEMYRRAQFAKELGSVIVMVDLVIGYTAIQSMSNWCRQNDMILHLHRAGHGTYTRQKNHGVSFRVIAKWMRLAGVDHIHAGTAVGKLEGDPMTVQGYYNVCRDTHTKVDLPRGIYFDQDWGALRKVMPVASGGIHAGQMHQLLDLFGDDVVLQFGGGTIGHPQGIQAGATANRVALEAMVLARNEGRDIANEGPQILRDAAKWCTPLAAALDTWGEISFNYASTDTSDYVPTPSVA</sequence>
<gene>
    <name evidence="1" type="primary">cbbL</name>
    <name type="ordered locus">Vapar_3032</name>
</gene>
<comment type="function">
    <text evidence="1">RuBisCO catalyzes two reactions: the carboxylation of D-ribulose 1,5-bisphosphate, the primary event in carbon dioxide fixation, as well as the oxidative fragmentation of the pentose substrate. Both reactions occur simultaneously and in competition at the same active site.</text>
</comment>
<comment type="catalytic activity">
    <reaction evidence="1">
        <text>2 (2R)-3-phosphoglycerate + 2 H(+) = D-ribulose 1,5-bisphosphate + CO2 + H2O</text>
        <dbReference type="Rhea" id="RHEA:23124"/>
        <dbReference type="ChEBI" id="CHEBI:15377"/>
        <dbReference type="ChEBI" id="CHEBI:15378"/>
        <dbReference type="ChEBI" id="CHEBI:16526"/>
        <dbReference type="ChEBI" id="CHEBI:57870"/>
        <dbReference type="ChEBI" id="CHEBI:58272"/>
        <dbReference type="EC" id="4.1.1.39"/>
    </reaction>
</comment>
<comment type="catalytic activity">
    <reaction evidence="1">
        <text>D-ribulose 1,5-bisphosphate + O2 = 2-phosphoglycolate + (2R)-3-phosphoglycerate + 2 H(+)</text>
        <dbReference type="Rhea" id="RHEA:36631"/>
        <dbReference type="ChEBI" id="CHEBI:15378"/>
        <dbReference type="ChEBI" id="CHEBI:15379"/>
        <dbReference type="ChEBI" id="CHEBI:57870"/>
        <dbReference type="ChEBI" id="CHEBI:58033"/>
        <dbReference type="ChEBI" id="CHEBI:58272"/>
    </reaction>
</comment>
<comment type="cofactor">
    <cofactor evidence="1">
        <name>Mg(2+)</name>
        <dbReference type="ChEBI" id="CHEBI:18420"/>
    </cofactor>
    <text evidence="1">Binds 1 Mg(2+) ion per subunit.</text>
</comment>
<comment type="subunit">
    <text evidence="1">Heterohexadecamer of 8 large chains and 8 small chains.</text>
</comment>
<comment type="miscellaneous">
    <text evidence="1">The basic functional RuBisCO is composed of a large chain homodimer in a 'head-to-tail' conformation. In form I RuBisCO this homodimer is arranged in a barrel-like tetramer with the small subunits forming a tetrameric 'cap' on each end of the 'barrel'.</text>
</comment>
<comment type="similarity">
    <text evidence="1">Belongs to the RuBisCO large chain family. Type I subfamily.</text>
</comment>